<gene>
    <name type="primary">PSEN1</name>
</gene>
<proteinExistence type="evidence at transcript level"/>
<reference key="1">
    <citation type="submission" date="1997-12" db="EMBL/GenBank/DDBJ databases">
        <title>Molecular cloning of bovine presenilin 1 gene.</title>
        <authorList>
            <person name="Sahara N."/>
            <person name="Shirasawa T."/>
            <person name="Mori H."/>
        </authorList>
    </citation>
    <scope>NUCLEOTIDE SEQUENCE [MRNA]</scope>
    <source>
        <tissue>Brain</tissue>
    </source>
</reference>
<evidence type="ECO:0000250" key="1"/>
<evidence type="ECO:0000250" key="2">
    <source>
        <dbReference type="UniProtKB" id="P49768"/>
    </source>
</evidence>
<evidence type="ECO:0000250" key="3">
    <source>
        <dbReference type="UniProtKB" id="P49769"/>
    </source>
</evidence>
<evidence type="ECO:0000250" key="4">
    <source>
        <dbReference type="UniProtKB" id="P97887"/>
    </source>
</evidence>
<evidence type="ECO:0000250" key="5">
    <source>
        <dbReference type="UniProtKB" id="Q4JIM4"/>
    </source>
</evidence>
<evidence type="ECO:0000256" key="6">
    <source>
        <dbReference type="SAM" id="MobiDB-lite"/>
    </source>
</evidence>
<evidence type="ECO:0000305" key="7"/>
<accession>Q9XT97</accession>
<comment type="function">
    <text evidence="2 3">Catalytic subunit of the gamma-secretase complex, an endoprotease complex that catalyzes the intramembrane cleavage of integral membrane proteins such as Notch receptors and APP (amyloid-beta precursor protein). Requires the presence of the other members of the gamma-secretase complex for protease activity. Plays a role in Notch and Wnt signaling cascades and regulation of downstream processes via its role in processing key regulatory proteins, and by regulating cytosolic CTNNB1 levels. Stimulates cell-cell adhesion via its interaction with CDH1; this stabilizes the complexes between CDH1 (E-cadherin) and its interaction partners CTNNB1 (beta-catenin), CTNND1 and JUP (gamma-catenin). Under conditions of apoptosis or calcium influx, cleaves CDH1. This promotes the disassembly of the complexes between CDH1 and CTNND1, JUP and CTNNB1, increases the pool of cytoplasmic CTNNB1, and thereby negatively regulates Wnt signaling (By similarity). Required for normal embryonic brain and skeleton development, and for normal angiogenesis (By similarity). Mediates the proteolytic cleavage of EphB2/CTF1 into EphB2/CTF2 (By similarity). The holoprotein functions as a calcium-leak channel that allows the passive movement of calcium from endoplasmic reticulum to cytosol and is therefore involved in calcium homeostasis. Involved in the regulation of neurite outgrowth (By similarity). Is a regulator of presynaptic facilitation, spike transmission and synaptic vesicles replenishment in a process that depends on gamma-secretase activity. It acts through the control of SYT7 presynaptic expression (By similarity).</text>
</comment>
<comment type="subunit">
    <text evidence="2 3">Homodimer. The functional gamma-secretase complex is composed of at least four polypeptides: a presenilin homodimer (PSEN1 or PSEN2), nicastrin (NCSTN), APH1 (APH1A or APH1B) and PEN2. Such minimal complex is sufficient for secretase activity. Other components which are associated with the complex include SLC25A64, SLC5A7 and PHB. As part of the gamma-secretase complex, interacts with CRB2 (via transmembrane domain) (By similarity). Predominantly heterodimer of a N-terminal (NTF) and a C-terminal (CTF) endoproteolytical fragment. Associates with proteolytic processed C-terminal fragments C83 and C99 of the amyloid precursor protein (APP). Associates with NOTCH1. Associates with cadherin/catenin adhesion complexes through direct binding to CDH1 or CDH2. Interaction with CDH1 stabilizes the complex and stimulates cell-cell aggregation. Interaction with CDH2 is essential for trafficking of CDH2 from the endoplasmic reticulum to the plasma membrane. Interacts with CTNND2, CTNNB1, CTNND1, JUP, HERPUD1, FLNA, FLNB, MTCH1, PKP4 and PARL. Interacts through its N-terminus with GFAP (By similarity). Interacts with DOCK3 (By similarity). Interacts with UBQLN1 (By similarity).</text>
</comment>
<comment type="subcellular location">
    <subcellularLocation>
        <location evidence="2">Endoplasmic reticulum</location>
    </subcellularLocation>
    <subcellularLocation>
        <location evidence="2">Endoplasmic reticulum membrane</location>
        <topology evidence="2">Multi-pass membrane protein</topology>
    </subcellularLocation>
    <subcellularLocation>
        <location evidence="2">Golgi apparatus membrane</location>
        <topology evidence="2">Multi-pass membrane protein</topology>
    </subcellularLocation>
    <subcellularLocation>
        <location evidence="2">Cytoplasmic granule</location>
    </subcellularLocation>
    <subcellularLocation>
        <location evidence="2">Cell membrane</location>
        <topology evidence="2">Multi-pass membrane protein</topology>
    </subcellularLocation>
    <subcellularLocation>
        <location evidence="2">Cell projection</location>
        <location evidence="2">Growth cone</location>
    </subcellularLocation>
    <subcellularLocation>
        <location evidence="2">Early endosome</location>
    </subcellularLocation>
    <subcellularLocation>
        <location evidence="2">Early endosome membrane</location>
        <topology evidence="2">Multi-pass membrane protein</topology>
    </subcellularLocation>
    <subcellularLocation>
        <location evidence="2">Cell projection</location>
        <location evidence="2">Neuron projection</location>
    </subcellularLocation>
    <subcellularLocation>
        <location evidence="5">Cell projection</location>
        <location evidence="5">Axon</location>
    </subcellularLocation>
    <subcellularLocation>
        <location evidence="5">Synapse</location>
    </subcellularLocation>
    <text evidence="2">Translocates with bound NOTCH1 from the endoplasmic reticulum and/or Golgi to the cell surface. Colocalizes with CDH1/2 at sites of cell-cell contact. Colocalizes with CTNNB1 in the endoplasmic reticulum and the proximity of the plasma membrane. Also present in azurophil granules of neutrophils. Colocalizes with UBQLN1 in the cell membrane and in cytoplasmic juxtanuclear structures called aggresomes.</text>
</comment>
<comment type="domain">
    <text evidence="2">The PAL motif is required for normal active site conformation.</text>
</comment>
<comment type="domain">
    <text evidence="2">Substrates, such as NOTCH1 and APP peptides, are bound between PSEN1 transmembrane domains and via the first lumenal loop and the cytoplasmic loop between the sixth and seventh transmembrane domains. Substrate binding causes a conformation change and formation of an intermolecular antiparallel beta-sheet between PSEN1 and its substrates.</text>
</comment>
<comment type="PTM">
    <text evidence="2">Heterogeneous proteolytic processing generates N-terminal (NTF) and C-terminal (CTF) fragments of approximately 35 and 20 kDa, respectively. During apoptosis, the C-terminal fragment (CTF) is further cleaved by caspase-3 to produce the fragment, PS1-CTF12.</text>
</comment>
<comment type="PTM">
    <text evidence="2">After endoproteolysis, the C-terminal fragment (CTF) is phosphorylated on serine residues by PKA and/or PKC. Phosphorylation on Ser-357 inhibits endoproteolysis.</text>
</comment>
<comment type="similarity">
    <text evidence="7">Belongs to the peptidase A22A family.</text>
</comment>
<keyword id="KW-0053">Apoptosis</keyword>
<keyword id="KW-0130">Cell adhesion</keyword>
<keyword id="KW-1003">Cell membrane</keyword>
<keyword id="KW-0966">Cell projection</keyword>
<keyword id="KW-0256">Endoplasmic reticulum</keyword>
<keyword id="KW-0967">Endosome</keyword>
<keyword id="KW-0333">Golgi apparatus</keyword>
<keyword id="KW-0378">Hydrolase</keyword>
<keyword id="KW-0472">Membrane</keyword>
<keyword id="KW-0914">Notch signaling pathway</keyword>
<keyword id="KW-0597">Phosphoprotein</keyword>
<keyword id="KW-0645">Protease</keyword>
<keyword id="KW-1185">Reference proteome</keyword>
<keyword id="KW-0770">Synapse</keyword>
<keyword id="KW-0812">Transmembrane</keyword>
<keyword id="KW-1133">Transmembrane helix</keyword>
<dbReference type="EC" id="3.4.23.-"/>
<dbReference type="EMBL" id="AF038936">
    <property type="protein sequence ID" value="AAD39023.1"/>
    <property type="molecule type" value="mRNA"/>
</dbReference>
<dbReference type="RefSeq" id="NP_777146.1">
    <property type="nucleotide sequence ID" value="NM_174721.2"/>
</dbReference>
<dbReference type="RefSeq" id="XP_005211988.1">
    <property type="nucleotide sequence ID" value="XM_005211931.5"/>
</dbReference>
<dbReference type="RefSeq" id="XP_005211989.1">
    <property type="nucleotide sequence ID" value="XM_005211932.5"/>
</dbReference>
<dbReference type="RefSeq" id="XP_015328709.1">
    <property type="nucleotide sequence ID" value="XM_015473223.1"/>
</dbReference>
<dbReference type="RefSeq" id="XP_059746218.1">
    <property type="nucleotide sequence ID" value="XM_059890235.1"/>
</dbReference>
<dbReference type="RefSeq" id="XP_059746219.1">
    <property type="nucleotide sequence ID" value="XM_059890236.1"/>
</dbReference>
<dbReference type="RefSeq" id="XP_059746220.1">
    <property type="nucleotide sequence ID" value="XM_059890237.1"/>
</dbReference>
<dbReference type="SMR" id="Q9XT97"/>
<dbReference type="FunCoup" id="Q9XT97">
    <property type="interactions" value="4474"/>
</dbReference>
<dbReference type="STRING" id="9913.ENSBTAP00000040765"/>
<dbReference type="MEROPS" id="A22.001"/>
<dbReference type="PaxDb" id="9913-ENSBTAP00000040765"/>
<dbReference type="GeneID" id="282705"/>
<dbReference type="KEGG" id="bta:282705"/>
<dbReference type="CTD" id="5663"/>
<dbReference type="VEuPathDB" id="HostDB:ENSBTAG00000011757"/>
<dbReference type="eggNOG" id="KOG2736">
    <property type="taxonomic scope" value="Eukaryota"/>
</dbReference>
<dbReference type="InParanoid" id="Q9XT97"/>
<dbReference type="OMA" id="MYYQDID"/>
<dbReference type="OrthoDB" id="20287at2759"/>
<dbReference type="TreeFam" id="TF315040"/>
<dbReference type="Reactome" id="R-BTA-1251985">
    <property type="pathway name" value="Nuclear signaling by ERBB4"/>
</dbReference>
<dbReference type="Reactome" id="R-BTA-193692">
    <property type="pathway name" value="Regulated proteolysis of p75NTR"/>
</dbReference>
<dbReference type="Reactome" id="R-BTA-205043">
    <property type="pathway name" value="NRIF signals cell death from the nucleus"/>
</dbReference>
<dbReference type="Reactome" id="R-BTA-3928665">
    <property type="pathway name" value="EPH-ephrin mediated repulsion of cells"/>
</dbReference>
<dbReference type="Reactome" id="R-BTA-6798695">
    <property type="pathway name" value="Neutrophil degranulation"/>
</dbReference>
<dbReference type="Reactome" id="R-BTA-9839383">
    <property type="pathway name" value="TGFBR3 PTM regulation"/>
</dbReference>
<dbReference type="Proteomes" id="UP000009136">
    <property type="component" value="Chromosome 10"/>
</dbReference>
<dbReference type="Bgee" id="ENSBTAG00000011757">
    <property type="expression patterns" value="Expressed in spermatid and 103 other cell types or tissues"/>
</dbReference>
<dbReference type="GO" id="GO:0016235">
    <property type="term" value="C:aggresome"/>
    <property type="evidence" value="ECO:0000250"/>
    <property type="project" value="UniProtKB"/>
</dbReference>
<dbReference type="GO" id="GO:0031901">
    <property type="term" value="C:early endosome membrane"/>
    <property type="evidence" value="ECO:0007669"/>
    <property type="project" value="UniProtKB-SubCell"/>
</dbReference>
<dbReference type="GO" id="GO:0005783">
    <property type="term" value="C:endoplasmic reticulum"/>
    <property type="evidence" value="ECO:0000250"/>
    <property type="project" value="UniProtKB"/>
</dbReference>
<dbReference type="GO" id="GO:0005789">
    <property type="term" value="C:endoplasmic reticulum membrane"/>
    <property type="evidence" value="ECO:0007669"/>
    <property type="project" value="UniProtKB-SubCell"/>
</dbReference>
<dbReference type="GO" id="GO:0070765">
    <property type="term" value="C:gamma-secretase complex"/>
    <property type="evidence" value="ECO:0000250"/>
    <property type="project" value="UniProtKB"/>
</dbReference>
<dbReference type="GO" id="GO:0005794">
    <property type="term" value="C:Golgi apparatus"/>
    <property type="evidence" value="ECO:0000250"/>
    <property type="project" value="UniProtKB"/>
</dbReference>
<dbReference type="GO" id="GO:0000139">
    <property type="term" value="C:Golgi membrane"/>
    <property type="evidence" value="ECO:0007669"/>
    <property type="project" value="UniProtKB-SubCell"/>
</dbReference>
<dbReference type="GO" id="GO:0030426">
    <property type="term" value="C:growth cone"/>
    <property type="evidence" value="ECO:0000250"/>
    <property type="project" value="UniProtKB"/>
</dbReference>
<dbReference type="GO" id="GO:0016020">
    <property type="term" value="C:membrane"/>
    <property type="evidence" value="ECO:0000250"/>
    <property type="project" value="UniProtKB"/>
</dbReference>
<dbReference type="GO" id="GO:0005739">
    <property type="term" value="C:mitochondrion"/>
    <property type="evidence" value="ECO:0000250"/>
    <property type="project" value="UniProtKB"/>
</dbReference>
<dbReference type="GO" id="GO:0043005">
    <property type="term" value="C:neuron projection"/>
    <property type="evidence" value="ECO:0000250"/>
    <property type="project" value="UniProtKB"/>
</dbReference>
<dbReference type="GO" id="GO:0005886">
    <property type="term" value="C:plasma membrane"/>
    <property type="evidence" value="ECO:0000250"/>
    <property type="project" value="UniProtKB"/>
</dbReference>
<dbReference type="GO" id="GO:0045202">
    <property type="term" value="C:synapse"/>
    <property type="evidence" value="ECO:0007669"/>
    <property type="project" value="UniProtKB-SubCell"/>
</dbReference>
<dbReference type="GO" id="GO:0042500">
    <property type="term" value="F:aspartic endopeptidase activity, intramembrane cleaving"/>
    <property type="evidence" value="ECO:0000250"/>
    <property type="project" value="UniProtKB"/>
</dbReference>
<dbReference type="GO" id="GO:0042982">
    <property type="term" value="P:amyloid precursor protein metabolic process"/>
    <property type="evidence" value="ECO:0000250"/>
    <property type="project" value="UniProtKB"/>
</dbReference>
<dbReference type="GO" id="GO:0034205">
    <property type="term" value="P:amyloid-beta formation"/>
    <property type="evidence" value="ECO:0000250"/>
    <property type="project" value="UniProtKB"/>
</dbReference>
<dbReference type="GO" id="GO:0006915">
    <property type="term" value="P:apoptotic process"/>
    <property type="evidence" value="ECO:0007669"/>
    <property type="project" value="UniProtKB-KW"/>
</dbReference>
<dbReference type="GO" id="GO:0055074">
    <property type="term" value="P:calcium ion homeostasis"/>
    <property type="evidence" value="ECO:0000318"/>
    <property type="project" value="GO_Central"/>
</dbReference>
<dbReference type="GO" id="GO:0007155">
    <property type="term" value="P:cell adhesion"/>
    <property type="evidence" value="ECO:0007669"/>
    <property type="project" value="UniProtKB-KW"/>
</dbReference>
<dbReference type="GO" id="GO:0032469">
    <property type="term" value="P:endoplasmic reticulum calcium ion homeostasis"/>
    <property type="evidence" value="ECO:0000250"/>
    <property type="project" value="UniProtKB"/>
</dbReference>
<dbReference type="GO" id="GO:0035556">
    <property type="term" value="P:intracellular signal transduction"/>
    <property type="evidence" value="ECO:0007669"/>
    <property type="project" value="InterPro"/>
</dbReference>
<dbReference type="GO" id="GO:0006509">
    <property type="term" value="P:membrane protein ectodomain proteolysis"/>
    <property type="evidence" value="ECO:0000250"/>
    <property type="project" value="UniProtKB"/>
</dbReference>
<dbReference type="GO" id="GO:0007219">
    <property type="term" value="P:Notch signaling pathway"/>
    <property type="evidence" value="ECO:0000318"/>
    <property type="project" value="GO_Central"/>
</dbReference>
<dbReference type="GO" id="GO:0016485">
    <property type="term" value="P:protein processing"/>
    <property type="evidence" value="ECO:0000250"/>
    <property type="project" value="UniProtKB"/>
</dbReference>
<dbReference type="GO" id="GO:0060828">
    <property type="term" value="P:regulation of canonical Wnt signaling pathway"/>
    <property type="evidence" value="ECO:0000250"/>
    <property type="project" value="UniProtKB"/>
</dbReference>
<dbReference type="GO" id="GO:0010975">
    <property type="term" value="P:regulation of neuron projection development"/>
    <property type="evidence" value="ECO:0000250"/>
    <property type="project" value="UniProtKB"/>
</dbReference>
<dbReference type="FunFam" id="1.10.472.100:FF:000001">
    <property type="entry name" value="Presenilin"/>
    <property type="match status" value="1"/>
</dbReference>
<dbReference type="Gene3D" id="1.10.472.100">
    <property type="entry name" value="Presenilin"/>
    <property type="match status" value="1"/>
</dbReference>
<dbReference type="InterPro" id="IPR002031">
    <property type="entry name" value="Pept_A22A_PS1"/>
</dbReference>
<dbReference type="InterPro" id="IPR001108">
    <property type="entry name" value="Peptidase_A22A"/>
</dbReference>
<dbReference type="InterPro" id="IPR006639">
    <property type="entry name" value="Preselin/SPP"/>
</dbReference>
<dbReference type="InterPro" id="IPR042524">
    <property type="entry name" value="Presenilin_C"/>
</dbReference>
<dbReference type="PANTHER" id="PTHR10202">
    <property type="entry name" value="PRESENILIN"/>
    <property type="match status" value="1"/>
</dbReference>
<dbReference type="PANTHER" id="PTHR10202:SF18">
    <property type="entry name" value="PRESENILIN-1"/>
    <property type="match status" value="1"/>
</dbReference>
<dbReference type="Pfam" id="PF01080">
    <property type="entry name" value="Presenilin"/>
    <property type="match status" value="1"/>
</dbReference>
<dbReference type="PRINTS" id="PR01072">
    <property type="entry name" value="PRESENILIN"/>
</dbReference>
<dbReference type="PRINTS" id="PR01073">
    <property type="entry name" value="PRESENILIN1"/>
</dbReference>
<dbReference type="SMART" id="SM00730">
    <property type="entry name" value="PSN"/>
    <property type="match status" value="1"/>
</dbReference>
<name>PSN1_BOVIN</name>
<protein>
    <recommendedName>
        <fullName>Presenilin-1</fullName>
        <shortName>PS-1</shortName>
        <ecNumber>3.4.23.-</ecNumber>
    </recommendedName>
    <component>
        <recommendedName>
            <fullName>Presenilin-1 NTF subunit</fullName>
        </recommendedName>
    </component>
    <component>
        <recommendedName>
            <fullName>Presenilin-1 CTF subunit</fullName>
        </recommendedName>
    </component>
    <component>
        <recommendedName>
            <fullName>Presenilin-1 CTF12</fullName>
            <shortName>PS1-CTF12</shortName>
        </recommendedName>
    </component>
</protein>
<feature type="chain" id="PRO_0000025589" description="Presenilin-1 NTF subunit" evidence="1">
    <location>
        <begin position="1"/>
        <end position="299"/>
    </location>
</feature>
<feature type="chain" id="PRO_0000025590" description="Presenilin-1 CTF subunit" evidence="1">
    <location>
        <begin position="300"/>
        <end position="478"/>
    </location>
</feature>
<feature type="chain" id="PRO_0000236051" description="Presenilin-1 CTF12" evidence="1">
    <location>
        <begin position="357"/>
        <end position="478"/>
    </location>
</feature>
<feature type="topological domain" description="Cytoplasmic" evidence="2">
    <location>
        <begin position="1"/>
        <end position="83"/>
    </location>
</feature>
<feature type="transmembrane region" description="Helical" evidence="2">
    <location>
        <begin position="84"/>
        <end position="104"/>
    </location>
</feature>
<feature type="topological domain" description="Lumenal" evidence="2">
    <location>
        <begin position="105"/>
        <end position="133"/>
    </location>
</feature>
<feature type="transmembrane region" description="Helical" evidence="2">
    <location>
        <begin position="134"/>
        <end position="154"/>
    </location>
</feature>
<feature type="topological domain" description="Cytoplasmic" evidence="2">
    <location>
        <begin position="155"/>
        <end position="167"/>
    </location>
</feature>
<feature type="transmembrane region" description="Helical" evidence="2">
    <location>
        <begin position="168"/>
        <end position="190"/>
    </location>
</feature>
<feature type="topological domain" description="Lumenal" evidence="2">
    <location>
        <begin position="191"/>
        <end position="195"/>
    </location>
</feature>
<feature type="transmembrane region" description="Helical" evidence="2">
    <location>
        <begin position="196"/>
        <end position="217"/>
    </location>
</feature>
<feature type="topological domain" description="Cytoplasmic" evidence="2">
    <location>
        <begin position="218"/>
        <end position="221"/>
    </location>
</feature>
<feature type="transmembrane region" description="Helical" evidence="2">
    <location>
        <begin position="222"/>
        <end position="242"/>
    </location>
</feature>
<feature type="topological domain" description="Lumenal" evidence="2">
    <location>
        <begin position="243"/>
        <end position="249"/>
    </location>
</feature>
<feature type="transmembrane region" description="Helical" evidence="2">
    <location>
        <begin position="250"/>
        <end position="273"/>
    </location>
</feature>
<feature type="topological domain" description="Cytoplasmic" evidence="2">
    <location>
        <begin position="274"/>
        <end position="391"/>
    </location>
</feature>
<feature type="transmembrane region" description="Helical" evidence="2">
    <location>
        <begin position="392"/>
        <end position="412"/>
    </location>
</feature>
<feature type="topological domain" description="Lumenal" evidence="2">
    <location>
        <begin position="413"/>
        <end position="418"/>
    </location>
</feature>
<feature type="transmembrane region" description="Helical" evidence="2">
    <location>
        <begin position="419"/>
        <end position="439"/>
    </location>
</feature>
<feature type="topological domain" description="Cytoplasmic" evidence="2">
    <location>
        <begin position="440"/>
        <end position="443"/>
    </location>
</feature>
<feature type="transmembrane region" description="Helical" evidence="2">
    <location>
        <begin position="444"/>
        <end position="464"/>
    </location>
</feature>
<feature type="topological domain" description="Lumenal" evidence="2">
    <location>
        <begin position="465"/>
        <end position="478"/>
    </location>
</feature>
<feature type="region of interest" description="Disordered" evidence="6">
    <location>
        <begin position="1"/>
        <end position="68"/>
    </location>
</feature>
<feature type="region of interest" description="Important for cleavage of target proteins" evidence="2">
    <location>
        <begin position="289"/>
        <end position="291"/>
    </location>
</feature>
<feature type="region of interest" description="Disordered" evidence="6">
    <location>
        <begin position="307"/>
        <end position="347"/>
    </location>
</feature>
<feature type="region of interest" description="Required for interaction with CTNNB1" evidence="2">
    <location>
        <begin position="333"/>
        <end position="461"/>
    </location>
</feature>
<feature type="region of interest" description="Required for interaction with CTNND2" evidence="2">
    <location>
        <begin position="383"/>
        <end position="410"/>
    </location>
</feature>
<feature type="region of interest" description="Important for cleavage of target proteins" evidence="2">
    <location>
        <begin position="388"/>
        <end position="392"/>
    </location>
</feature>
<feature type="region of interest" description="Important for cleavage of target proteins" evidence="2">
    <location>
        <begin position="443"/>
        <end position="445"/>
    </location>
</feature>
<feature type="region of interest" description="Interaction with MTCH1" evidence="2">
    <location>
        <begin position="475"/>
        <end position="478"/>
    </location>
</feature>
<feature type="short sequence motif" description="PAL" evidence="7">
    <location>
        <begin position="444"/>
        <end position="446"/>
    </location>
</feature>
<feature type="compositionally biased region" description="Polar residues" evidence="6">
    <location>
        <begin position="10"/>
        <end position="29"/>
    </location>
</feature>
<feature type="compositionally biased region" description="Basic and acidic residues" evidence="6">
    <location>
        <begin position="30"/>
        <end position="40"/>
    </location>
</feature>
<feature type="compositionally biased region" description="Polar residues" evidence="6">
    <location>
        <begin position="48"/>
        <end position="57"/>
    </location>
</feature>
<feature type="compositionally biased region" description="Polar residues" evidence="6">
    <location>
        <begin position="312"/>
        <end position="339"/>
    </location>
</feature>
<feature type="active site" evidence="2">
    <location>
        <position position="258"/>
    </location>
</feature>
<feature type="active site" evidence="2">
    <location>
        <position position="396"/>
    </location>
</feature>
<feature type="site" description="Cleavage; alternate" evidence="2">
    <location>
        <begin position="292"/>
        <end position="293"/>
    </location>
</feature>
<feature type="site" description="Cleavage; alternate" evidence="2">
    <location>
        <begin position="293"/>
        <end position="294"/>
    </location>
</feature>
<feature type="site" description="Cleavage" evidence="2">
    <location>
        <begin position="299"/>
        <end position="300"/>
    </location>
</feature>
<feature type="site" description="Cleavage; by caspase" evidence="2">
    <location>
        <begin position="356"/>
        <end position="357"/>
    </location>
</feature>
<feature type="modified residue" description="Phosphoserine" evidence="4">
    <location>
        <position position="52"/>
    </location>
</feature>
<feature type="modified residue" description="Phosphoserine; by PKA" evidence="2">
    <location>
        <position position="311"/>
    </location>
</feature>
<feature type="modified residue" description="Phosphothreonine" evidence="4">
    <location>
        <position position="340"/>
    </location>
</feature>
<feature type="modified residue" description="Phosphoserine" evidence="4">
    <location>
        <position position="342"/>
    </location>
</feature>
<feature type="modified residue" description="Phosphoserine; by PKC" evidence="2">
    <location>
        <position position="357"/>
    </location>
</feature>
<feature type="modified residue" description="Phosphoserine" evidence="2">
    <location>
        <position position="378"/>
    </location>
</feature>
<feature type="modified residue" description="Phosphoserine" evidence="3">
    <location>
        <position position="382"/>
    </location>
</feature>
<organism>
    <name type="scientific">Bos taurus</name>
    <name type="common">Bovine</name>
    <dbReference type="NCBI Taxonomy" id="9913"/>
    <lineage>
        <taxon>Eukaryota</taxon>
        <taxon>Metazoa</taxon>
        <taxon>Chordata</taxon>
        <taxon>Craniata</taxon>
        <taxon>Vertebrata</taxon>
        <taxon>Euteleostomi</taxon>
        <taxon>Mammalia</taxon>
        <taxon>Eutheria</taxon>
        <taxon>Laurasiatheria</taxon>
        <taxon>Artiodactyla</taxon>
        <taxon>Ruminantia</taxon>
        <taxon>Pecora</taxon>
        <taxon>Bovidae</taxon>
        <taxon>Bovinae</taxon>
        <taxon>Bos</taxon>
    </lineage>
</organism>
<sequence>MTELPAPLSYFQNAQMSEDNHLSNTVRSQNDSRERHEHGNERRRRGNTESVSNGRAPSSSQQVVEQEEEEDEELTLKYGAKHVIMLFVPVTLCMVVVVATIKSVSFYTRKDGQLIYTPFTEDTETVAQRALHSILNAVIMISVIVIMTILLVVLYKYRCYKVIHAWLIVSSLLLLFFFSFIYLGEVFKTYNVAMDYISVALLIWNFGVVGMIAIHWKGPLRLQQAYLIMISALMALVFIKYLPEWTAWLILAVISVYDLVAVLCPKGPLRMLVETAQERNETLFPALIYSSTMVWLVNMAEGDPEAQRKVSKNSNYNAQRPANSPVTTTGTESESQDPVTESDDGGFSEEWEAQRDSRLGPHHSTAESRSAVQDLSSSILASEDPEERGVKLGLGDFIFYSVLVGKASATASGDWNTTIACFVAILIGLCLTLLLLAIFKKALPALPVSITFGLIFYFATDYLVQPFMDQLAFHQFYI</sequence>